<feature type="chain" id="PRO_0000188344" description="Glycerol-3-phosphate acyltransferase">
    <location>
        <begin position="1"/>
        <end position="232"/>
    </location>
</feature>
<feature type="transmembrane region" description="Helical" evidence="1">
    <location>
        <begin position="4"/>
        <end position="24"/>
    </location>
</feature>
<feature type="transmembrane region" description="Helical" evidence="1">
    <location>
        <begin position="56"/>
        <end position="76"/>
    </location>
</feature>
<feature type="transmembrane region" description="Helical" evidence="1">
    <location>
        <begin position="90"/>
        <end position="110"/>
    </location>
</feature>
<feature type="transmembrane region" description="Helical" evidence="1">
    <location>
        <begin position="124"/>
        <end position="144"/>
    </location>
</feature>
<feature type="transmembrane region" description="Helical" evidence="1">
    <location>
        <begin position="152"/>
        <end position="172"/>
    </location>
</feature>
<feature type="transmembrane region" description="Helical" evidence="1">
    <location>
        <begin position="191"/>
        <end position="211"/>
    </location>
</feature>
<protein>
    <recommendedName>
        <fullName evidence="1">Glycerol-3-phosphate acyltransferase</fullName>
    </recommendedName>
    <alternativeName>
        <fullName evidence="1">Acyl-PO4 G3P acyltransferase</fullName>
    </alternativeName>
    <alternativeName>
        <fullName evidence="1">Acyl-phosphate--glycerol-3-phosphate acyltransferase</fullName>
    </alternativeName>
    <alternativeName>
        <fullName evidence="1">G3P acyltransferase</fullName>
        <shortName evidence="1">GPAT</shortName>
        <ecNumber evidence="1">2.3.1.275</ecNumber>
    </alternativeName>
    <alternativeName>
        <fullName evidence="1">Lysophosphatidic acid synthase</fullName>
        <shortName evidence="1">LPA synthase</shortName>
    </alternativeName>
</protein>
<sequence length="232" mass="24630">MLTFLAIIVVAYLIGSIPTSIIAGKLLKGIDIREFGSGNAGGTNAFRVLGWKAGLVVTLIDIAKGTIAAVPVVGFFKAHPLGAFPDMNEIALSLIAGMAAVIGHVFTVFAGFKGGKGVSTAAGMLIGIAPVSMLMVIGIFLLAVTISRYVSVGSILAAIAFPLIIAIRKYVFDLGSGLDYRFFDHWFVHDSLDYHLLIFGGIVAVAIIYTHRANIKRLFSGTENRLSFGRKN</sequence>
<gene>
    <name evidence="1" type="primary">plsY</name>
    <name type="ordered locus">CT0093</name>
</gene>
<reference key="1">
    <citation type="journal article" date="2002" name="Proc. Natl. Acad. Sci. U.S.A.">
        <title>The complete genome sequence of Chlorobium tepidum TLS, a photosynthetic, anaerobic, green-sulfur bacterium.</title>
        <authorList>
            <person name="Eisen J.A."/>
            <person name="Nelson K.E."/>
            <person name="Paulsen I.T."/>
            <person name="Heidelberg J.F."/>
            <person name="Wu M."/>
            <person name="Dodson R.J."/>
            <person name="DeBoy R.T."/>
            <person name="Gwinn M.L."/>
            <person name="Nelson W.C."/>
            <person name="Haft D.H."/>
            <person name="Hickey E.K."/>
            <person name="Peterson J.D."/>
            <person name="Durkin A.S."/>
            <person name="Kolonay J.F."/>
            <person name="Yang F."/>
            <person name="Holt I.E."/>
            <person name="Umayam L.A."/>
            <person name="Mason T.M."/>
            <person name="Brenner M."/>
            <person name="Shea T.P."/>
            <person name="Parksey D.S."/>
            <person name="Nierman W.C."/>
            <person name="Feldblyum T.V."/>
            <person name="Hansen C.L."/>
            <person name="Craven M.B."/>
            <person name="Radune D."/>
            <person name="Vamathevan J.J."/>
            <person name="Khouri H.M."/>
            <person name="White O."/>
            <person name="Gruber T.M."/>
            <person name="Ketchum K.A."/>
            <person name="Venter J.C."/>
            <person name="Tettelin H."/>
            <person name="Bryant D.A."/>
            <person name="Fraser C.M."/>
        </authorList>
    </citation>
    <scope>NUCLEOTIDE SEQUENCE [LARGE SCALE GENOMIC DNA]</scope>
    <source>
        <strain>ATCC 49652 / DSM 12025 / NBRC 103806 / TLS</strain>
    </source>
</reference>
<comment type="function">
    <text evidence="1">Catalyzes the transfer of an acyl group from acyl-phosphate (acyl-PO(4)) to glycerol-3-phosphate (G3P) to form lysophosphatidic acid (LPA). This enzyme utilizes acyl-phosphate as fatty acyl donor, but not acyl-CoA or acyl-ACP.</text>
</comment>
<comment type="catalytic activity">
    <reaction evidence="1">
        <text>an acyl phosphate + sn-glycerol 3-phosphate = a 1-acyl-sn-glycero-3-phosphate + phosphate</text>
        <dbReference type="Rhea" id="RHEA:34075"/>
        <dbReference type="ChEBI" id="CHEBI:43474"/>
        <dbReference type="ChEBI" id="CHEBI:57597"/>
        <dbReference type="ChEBI" id="CHEBI:57970"/>
        <dbReference type="ChEBI" id="CHEBI:59918"/>
        <dbReference type="EC" id="2.3.1.275"/>
    </reaction>
</comment>
<comment type="pathway">
    <text evidence="1">Lipid metabolism; phospholipid metabolism.</text>
</comment>
<comment type="subunit">
    <text evidence="1">Probably interacts with PlsX.</text>
</comment>
<comment type="subcellular location">
    <subcellularLocation>
        <location evidence="1">Cell inner membrane</location>
        <topology evidence="1">Multi-pass membrane protein</topology>
    </subcellularLocation>
</comment>
<comment type="similarity">
    <text evidence="1">Belongs to the PlsY family.</text>
</comment>
<organism>
    <name type="scientific">Chlorobaculum tepidum (strain ATCC 49652 / DSM 12025 / NBRC 103806 / TLS)</name>
    <name type="common">Chlorobium tepidum</name>
    <dbReference type="NCBI Taxonomy" id="194439"/>
    <lineage>
        <taxon>Bacteria</taxon>
        <taxon>Pseudomonadati</taxon>
        <taxon>Chlorobiota</taxon>
        <taxon>Chlorobiia</taxon>
        <taxon>Chlorobiales</taxon>
        <taxon>Chlorobiaceae</taxon>
        <taxon>Chlorobaculum</taxon>
    </lineage>
</organism>
<keyword id="KW-0997">Cell inner membrane</keyword>
<keyword id="KW-1003">Cell membrane</keyword>
<keyword id="KW-0444">Lipid biosynthesis</keyword>
<keyword id="KW-0443">Lipid metabolism</keyword>
<keyword id="KW-0472">Membrane</keyword>
<keyword id="KW-0594">Phospholipid biosynthesis</keyword>
<keyword id="KW-1208">Phospholipid metabolism</keyword>
<keyword id="KW-1185">Reference proteome</keyword>
<keyword id="KW-0808">Transferase</keyword>
<keyword id="KW-0812">Transmembrane</keyword>
<keyword id="KW-1133">Transmembrane helix</keyword>
<proteinExistence type="inferred from homology"/>
<name>PLSY_CHLTE</name>
<evidence type="ECO:0000255" key="1">
    <source>
        <dbReference type="HAMAP-Rule" id="MF_01043"/>
    </source>
</evidence>
<accession>Q8KG75</accession>
<dbReference type="EC" id="2.3.1.275" evidence="1"/>
<dbReference type="EMBL" id="AE006470">
    <property type="protein sequence ID" value="AAM71341.1"/>
    <property type="molecule type" value="Genomic_DNA"/>
</dbReference>
<dbReference type="RefSeq" id="NP_660999.1">
    <property type="nucleotide sequence ID" value="NC_002932.3"/>
</dbReference>
<dbReference type="RefSeq" id="WP_010931787.1">
    <property type="nucleotide sequence ID" value="NC_002932.3"/>
</dbReference>
<dbReference type="SMR" id="Q8KG75"/>
<dbReference type="STRING" id="194439.CT0093"/>
<dbReference type="EnsemblBacteria" id="AAM71341">
    <property type="protein sequence ID" value="AAM71341"/>
    <property type="gene ID" value="CT0093"/>
</dbReference>
<dbReference type="KEGG" id="cte:CT0093"/>
<dbReference type="PATRIC" id="fig|194439.7.peg.94"/>
<dbReference type="eggNOG" id="COG0344">
    <property type="taxonomic scope" value="Bacteria"/>
</dbReference>
<dbReference type="HOGENOM" id="CLU_081254_3_0_10"/>
<dbReference type="OrthoDB" id="9777124at2"/>
<dbReference type="UniPathway" id="UPA00085"/>
<dbReference type="Proteomes" id="UP000001007">
    <property type="component" value="Chromosome"/>
</dbReference>
<dbReference type="GO" id="GO:0005886">
    <property type="term" value="C:plasma membrane"/>
    <property type="evidence" value="ECO:0007669"/>
    <property type="project" value="UniProtKB-SubCell"/>
</dbReference>
<dbReference type="GO" id="GO:0043772">
    <property type="term" value="F:acyl-phosphate glycerol-3-phosphate acyltransferase activity"/>
    <property type="evidence" value="ECO:0007669"/>
    <property type="project" value="UniProtKB-UniRule"/>
</dbReference>
<dbReference type="GO" id="GO:0008654">
    <property type="term" value="P:phospholipid biosynthetic process"/>
    <property type="evidence" value="ECO:0007669"/>
    <property type="project" value="UniProtKB-UniRule"/>
</dbReference>
<dbReference type="HAMAP" id="MF_01043">
    <property type="entry name" value="PlsY"/>
    <property type="match status" value="1"/>
</dbReference>
<dbReference type="InterPro" id="IPR003811">
    <property type="entry name" value="G3P_acylTferase_PlsY"/>
</dbReference>
<dbReference type="NCBIfam" id="TIGR00023">
    <property type="entry name" value="glycerol-3-phosphate 1-O-acyltransferase PlsY"/>
    <property type="match status" value="1"/>
</dbReference>
<dbReference type="PANTHER" id="PTHR30309:SF0">
    <property type="entry name" value="GLYCEROL-3-PHOSPHATE ACYLTRANSFERASE-RELATED"/>
    <property type="match status" value="1"/>
</dbReference>
<dbReference type="PANTHER" id="PTHR30309">
    <property type="entry name" value="INNER MEMBRANE PROTEIN YGIH"/>
    <property type="match status" value="1"/>
</dbReference>
<dbReference type="Pfam" id="PF02660">
    <property type="entry name" value="G3P_acyltransf"/>
    <property type="match status" value="1"/>
</dbReference>
<dbReference type="SMART" id="SM01207">
    <property type="entry name" value="G3P_acyltransf"/>
    <property type="match status" value="1"/>
</dbReference>